<proteinExistence type="inferred from homology"/>
<evidence type="ECO:0000250" key="1"/>
<evidence type="ECO:0000255" key="2"/>
<evidence type="ECO:0000305" key="3"/>
<name>YOHC_ECOL6</name>
<protein>
    <recommendedName>
        <fullName>Inner membrane protein YohC</fullName>
    </recommendedName>
</protein>
<comment type="subcellular location">
    <subcellularLocation>
        <location evidence="1">Cell inner membrane</location>
        <topology evidence="1">Multi-pass membrane protein</topology>
    </subcellularLocation>
</comment>
<comment type="sequence caution" evidence="3">
    <conflict type="erroneous initiation">
        <sequence resource="EMBL-CDS" id="AAN81123"/>
    </conflict>
</comment>
<organism>
    <name type="scientific">Escherichia coli O6:H1 (strain CFT073 / ATCC 700928 / UPEC)</name>
    <dbReference type="NCBI Taxonomy" id="199310"/>
    <lineage>
        <taxon>Bacteria</taxon>
        <taxon>Pseudomonadati</taxon>
        <taxon>Pseudomonadota</taxon>
        <taxon>Gammaproteobacteria</taxon>
        <taxon>Enterobacterales</taxon>
        <taxon>Enterobacteriaceae</taxon>
        <taxon>Escherichia</taxon>
    </lineage>
</organism>
<sequence length="195" mass="21691">MSHVWGLFSHPDREMQVINRENETISHHYTHHVLLMAAIPVICAFIGTTQIGWNFGDGTILKLSWFTGLALAVLFYGVMLAGVAVMGRVIWWMARNYPQRPSLAHCMVFAGYVATPLFLSGLVALYPLVWLCALVGTVALFYTGYLLYLGIPSFLNINKEEGLSFSSSTLAIGVLVLEVLLALTVILWGYGYRLF</sequence>
<reference key="1">
    <citation type="journal article" date="2002" name="Proc. Natl. Acad. Sci. U.S.A.">
        <title>Extensive mosaic structure revealed by the complete genome sequence of uropathogenic Escherichia coli.</title>
        <authorList>
            <person name="Welch R.A."/>
            <person name="Burland V."/>
            <person name="Plunkett G. III"/>
            <person name="Redford P."/>
            <person name="Roesch P."/>
            <person name="Rasko D."/>
            <person name="Buckles E.L."/>
            <person name="Liou S.-R."/>
            <person name="Boutin A."/>
            <person name="Hackett J."/>
            <person name="Stroud D."/>
            <person name="Mayhew G.F."/>
            <person name="Rose D.J."/>
            <person name="Zhou S."/>
            <person name="Schwartz D.C."/>
            <person name="Perna N.T."/>
            <person name="Mobley H.L.T."/>
            <person name="Donnenberg M.S."/>
            <person name="Blattner F.R."/>
        </authorList>
    </citation>
    <scope>NUCLEOTIDE SEQUENCE [LARGE SCALE GENOMIC DNA]</scope>
    <source>
        <strain>CFT073 / ATCC 700928 / UPEC</strain>
    </source>
</reference>
<dbReference type="EMBL" id="AE014075">
    <property type="protein sequence ID" value="AAN81123.1"/>
    <property type="status" value="ALT_INIT"/>
    <property type="molecule type" value="Genomic_DNA"/>
</dbReference>
<dbReference type="RefSeq" id="WP_001295454.1">
    <property type="nucleotide sequence ID" value="NZ_CP051263.1"/>
</dbReference>
<dbReference type="SMR" id="P0AD18"/>
<dbReference type="STRING" id="199310.c2667"/>
<dbReference type="KEGG" id="ecc:c2667"/>
<dbReference type="eggNOG" id="ENOG502Z7KS">
    <property type="taxonomic scope" value="Bacteria"/>
</dbReference>
<dbReference type="HOGENOM" id="CLU_099801_0_0_6"/>
<dbReference type="Proteomes" id="UP000001410">
    <property type="component" value="Chromosome"/>
</dbReference>
<dbReference type="GO" id="GO:0005886">
    <property type="term" value="C:plasma membrane"/>
    <property type="evidence" value="ECO:0007669"/>
    <property type="project" value="UniProtKB-SubCell"/>
</dbReference>
<dbReference type="InterPro" id="IPR006977">
    <property type="entry name" value="Yip1_dom"/>
</dbReference>
<dbReference type="Pfam" id="PF04893">
    <property type="entry name" value="Yip1"/>
    <property type="match status" value="1"/>
</dbReference>
<accession>P0AD18</accession>
<accession>P33365</accession>
<keyword id="KW-0997">Cell inner membrane</keyword>
<keyword id="KW-1003">Cell membrane</keyword>
<keyword id="KW-0472">Membrane</keyword>
<keyword id="KW-1185">Reference proteome</keyword>
<keyword id="KW-0812">Transmembrane</keyword>
<keyword id="KW-1133">Transmembrane helix</keyword>
<gene>
    <name type="primary">yohC</name>
    <name type="ordered locus">c2667</name>
</gene>
<feature type="chain" id="PRO_0000169139" description="Inner membrane protein YohC">
    <location>
        <begin position="1"/>
        <end position="195"/>
    </location>
</feature>
<feature type="topological domain" description="Cytoplasmic" evidence="2">
    <location>
        <begin position="1"/>
        <end position="32"/>
    </location>
</feature>
<feature type="transmembrane region" description="Helical" evidence="2">
    <location>
        <begin position="33"/>
        <end position="55"/>
    </location>
</feature>
<feature type="topological domain" description="Periplasmic" evidence="2">
    <location>
        <begin position="56"/>
        <end position="64"/>
    </location>
</feature>
<feature type="transmembrane region" description="Helical" evidence="2">
    <location>
        <begin position="65"/>
        <end position="87"/>
    </location>
</feature>
<feature type="topological domain" description="Cytoplasmic" evidence="2">
    <location>
        <begin position="88"/>
        <end position="107"/>
    </location>
</feature>
<feature type="transmembrane region" description="Helical" evidence="2">
    <location>
        <begin position="108"/>
        <end position="130"/>
    </location>
</feature>
<feature type="topological domain" description="Periplasmic" evidence="2">
    <location>
        <begin position="131"/>
        <end position="134"/>
    </location>
</feature>
<feature type="transmembrane region" description="Helical" evidence="2">
    <location>
        <begin position="135"/>
        <end position="157"/>
    </location>
</feature>
<feature type="topological domain" description="Cytoplasmic" evidence="2">
    <location>
        <begin position="158"/>
        <end position="169"/>
    </location>
</feature>
<feature type="transmembrane region" description="Helical" evidence="2">
    <location>
        <begin position="170"/>
        <end position="192"/>
    </location>
</feature>
<feature type="topological domain" description="Periplasmic" evidence="2">
    <location>
        <begin position="193"/>
        <end position="195"/>
    </location>
</feature>